<feature type="chain" id="PRO_0000419615" description="Protein CER1-like 1">
    <location>
        <begin position="1"/>
        <end position="627"/>
    </location>
</feature>
<feature type="transmembrane region" description="Helical" evidence="1">
    <location>
        <begin position="19"/>
        <end position="39"/>
    </location>
</feature>
<feature type="transmembrane region" description="Helical" evidence="1">
    <location>
        <begin position="48"/>
        <end position="68"/>
    </location>
</feature>
<feature type="transmembrane region" description="Helical" evidence="1">
    <location>
        <begin position="126"/>
        <end position="146"/>
    </location>
</feature>
<feature type="transmembrane region" description="Helical" evidence="1">
    <location>
        <begin position="186"/>
        <end position="206"/>
    </location>
</feature>
<feature type="transmembrane region" description="Helical" evidence="1">
    <location>
        <begin position="328"/>
        <end position="348"/>
    </location>
</feature>
<feature type="domain" description="Fatty acid hydroxylase" evidence="1">
    <location>
        <begin position="138"/>
        <end position="272"/>
    </location>
</feature>
<feature type="splice variant" id="VSP_044265" description="In isoform 2." evidence="4">
    <location>
        <begin position="377"/>
        <end position="380"/>
    </location>
</feature>
<name>CERL1_ARATH</name>
<reference key="1">
    <citation type="journal article" date="2000" name="Nature">
        <title>Sequence and analysis of chromosome 1 of the plant Arabidopsis thaliana.</title>
        <authorList>
            <person name="Theologis A."/>
            <person name="Ecker J.R."/>
            <person name="Palm C.J."/>
            <person name="Federspiel N.A."/>
            <person name="Kaul S."/>
            <person name="White O."/>
            <person name="Alonso J."/>
            <person name="Altafi H."/>
            <person name="Araujo R."/>
            <person name="Bowman C.L."/>
            <person name="Brooks S.Y."/>
            <person name="Buehler E."/>
            <person name="Chan A."/>
            <person name="Chao Q."/>
            <person name="Chen H."/>
            <person name="Cheuk R.F."/>
            <person name="Chin C.W."/>
            <person name="Chung M.K."/>
            <person name="Conn L."/>
            <person name="Conway A.B."/>
            <person name="Conway A.R."/>
            <person name="Creasy T.H."/>
            <person name="Dewar K."/>
            <person name="Dunn P."/>
            <person name="Etgu P."/>
            <person name="Feldblyum T.V."/>
            <person name="Feng J.-D."/>
            <person name="Fong B."/>
            <person name="Fujii C.Y."/>
            <person name="Gill J.E."/>
            <person name="Goldsmith A.D."/>
            <person name="Haas B."/>
            <person name="Hansen N.F."/>
            <person name="Hughes B."/>
            <person name="Huizar L."/>
            <person name="Hunter J.L."/>
            <person name="Jenkins J."/>
            <person name="Johnson-Hopson C."/>
            <person name="Khan S."/>
            <person name="Khaykin E."/>
            <person name="Kim C.J."/>
            <person name="Koo H.L."/>
            <person name="Kremenetskaia I."/>
            <person name="Kurtz D.B."/>
            <person name="Kwan A."/>
            <person name="Lam B."/>
            <person name="Langin-Hooper S."/>
            <person name="Lee A."/>
            <person name="Lee J.M."/>
            <person name="Lenz C.A."/>
            <person name="Li J.H."/>
            <person name="Li Y.-P."/>
            <person name="Lin X."/>
            <person name="Liu S.X."/>
            <person name="Liu Z.A."/>
            <person name="Luros J.S."/>
            <person name="Maiti R."/>
            <person name="Marziali A."/>
            <person name="Militscher J."/>
            <person name="Miranda M."/>
            <person name="Nguyen M."/>
            <person name="Nierman W.C."/>
            <person name="Osborne B.I."/>
            <person name="Pai G."/>
            <person name="Peterson J."/>
            <person name="Pham P.K."/>
            <person name="Rizzo M."/>
            <person name="Rooney T."/>
            <person name="Rowley D."/>
            <person name="Sakano H."/>
            <person name="Salzberg S.L."/>
            <person name="Schwartz J.R."/>
            <person name="Shinn P."/>
            <person name="Southwick A.M."/>
            <person name="Sun H."/>
            <person name="Tallon L.J."/>
            <person name="Tambunga G."/>
            <person name="Toriumi M.J."/>
            <person name="Town C.D."/>
            <person name="Utterback T."/>
            <person name="Van Aken S."/>
            <person name="Vaysberg M."/>
            <person name="Vysotskaia V.S."/>
            <person name="Walker M."/>
            <person name="Wu D."/>
            <person name="Yu G."/>
            <person name="Fraser C.M."/>
            <person name="Venter J.C."/>
            <person name="Davis R.W."/>
        </authorList>
    </citation>
    <scope>NUCLEOTIDE SEQUENCE [LARGE SCALE GENOMIC DNA]</scope>
    <source>
        <strain>cv. Columbia</strain>
    </source>
</reference>
<reference key="2">
    <citation type="journal article" date="2017" name="Plant J.">
        <title>Araport11: a complete reannotation of the Arabidopsis thaliana reference genome.</title>
        <authorList>
            <person name="Cheng C.Y."/>
            <person name="Krishnakumar V."/>
            <person name="Chan A.P."/>
            <person name="Thibaud-Nissen F."/>
            <person name="Schobel S."/>
            <person name="Town C.D."/>
        </authorList>
    </citation>
    <scope>GENOME REANNOTATION</scope>
    <source>
        <strain>cv. Columbia</strain>
    </source>
</reference>
<reference key="3">
    <citation type="journal article" date="1995" name="Plant Cell">
        <title>Molecular characterization of the CER1 gene of arabidopsis involved in epicuticular wax biosynthesis and pollen fertility.</title>
        <authorList>
            <person name="Aarts M.G."/>
            <person name="Keijzer C.J."/>
            <person name="Stiekema W.J."/>
            <person name="Pereira A."/>
        </authorList>
    </citation>
    <scope>IDENTIFICATION</scope>
    <scope>TISSUE SPECIFICITY</scope>
    <source>
        <strain>cv. Landsberg erecta</strain>
    </source>
</reference>
<reference key="4">
    <citation type="journal article" date="2011" name="Plant Physiol.">
        <title>Overexpression of Arabidopsis ECERIFERUM1 promotes wax very-long-chain alkane biosynthesis and influences plant response to biotic and abiotic stresses.</title>
        <authorList>
            <person name="Bourdenx B."/>
            <person name="Bernard A."/>
            <person name="Domergue F."/>
            <person name="Pascal S."/>
            <person name="Leger A."/>
            <person name="Roby D."/>
            <person name="Pervent M."/>
            <person name="Vile D."/>
            <person name="Haslam R.P."/>
            <person name="Napier J.A."/>
            <person name="Lessire R."/>
            <person name="Joubes J."/>
        </authorList>
    </citation>
    <scope>IDENTIFICATION</scope>
    <scope>TISSUE SPECIFICITY</scope>
</reference>
<accession>F4HVX7</accession>
<accession>F4HVX8</accession>
<accession>O23678</accession>
<protein>
    <recommendedName>
        <fullName>Protein CER1-like 1</fullName>
    </recommendedName>
</protein>
<evidence type="ECO:0000255" key="1"/>
<evidence type="ECO:0000269" key="2">
    <source>
    </source>
</evidence>
<evidence type="ECO:0000269" key="3">
    <source>
    </source>
</evidence>
<evidence type="ECO:0000305" key="4"/>
<organism>
    <name type="scientific">Arabidopsis thaliana</name>
    <name type="common">Mouse-ear cress</name>
    <dbReference type="NCBI Taxonomy" id="3702"/>
    <lineage>
        <taxon>Eukaryota</taxon>
        <taxon>Viridiplantae</taxon>
        <taxon>Streptophyta</taxon>
        <taxon>Embryophyta</taxon>
        <taxon>Tracheophyta</taxon>
        <taxon>Spermatophyta</taxon>
        <taxon>Magnoliopsida</taxon>
        <taxon>eudicotyledons</taxon>
        <taxon>Gunneridae</taxon>
        <taxon>Pentapetalae</taxon>
        <taxon>rosids</taxon>
        <taxon>malvids</taxon>
        <taxon>Brassicales</taxon>
        <taxon>Brassicaceae</taxon>
        <taxon>Camelineae</taxon>
        <taxon>Arabidopsis</taxon>
    </lineage>
</organism>
<comment type="subcellular location">
    <subcellularLocation>
        <location evidence="4">Membrane</location>
        <topology evidence="4">Multi-pass membrane protein</topology>
    </subcellularLocation>
</comment>
<comment type="alternative products">
    <event type="alternative splicing"/>
    <isoform>
        <id>F4HVX7-1</id>
        <name>1</name>
        <sequence type="displayed"/>
    </isoform>
    <isoform>
        <id>F4HVX7-2</id>
        <name>2</name>
        <sequence type="described" ref="VSP_044265"/>
    </isoform>
</comment>
<comment type="tissue specificity">
    <text evidence="2 3">Expressed in flowers and siliques. Not detected in pollen, pedicels and seeds.</text>
</comment>
<comment type="similarity">
    <text evidence="4">Belongs to the sterol desaturase family.</text>
</comment>
<comment type="sequence caution" evidence="4">
    <conflict type="erroneous gene model prediction">
        <sequence resource="EMBL-CDS" id="AAC24373"/>
    </conflict>
</comment>
<keyword id="KW-0025">Alternative splicing</keyword>
<keyword id="KW-0472">Membrane</keyword>
<keyword id="KW-1185">Reference proteome</keyword>
<keyword id="KW-0812">Transmembrane</keyword>
<keyword id="KW-1133">Transmembrane helix</keyword>
<proteinExistence type="evidence at transcript level"/>
<gene>
    <name type="ordered locus">At1g02190</name>
    <name type="ORF">T7I23.9</name>
</gene>
<dbReference type="EMBL" id="U89959">
    <property type="protein sequence ID" value="AAC24373.1"/>
    <property type="status" value="ALT_SEQ"/>
    <property type="molecule type" value="Genomic_DNA"/>
</dbReference>
<dbReference type="EMBL" id="CP002684">
    <property type="protein sequence ID" value="AEE27398.1"/>
    <property type="molecule type" value="Genomic_DNA"/>
</dbReference>
<dbReference type="EMBL" id="CP002684">
    <property type="protein sequence ID" value="AEE27399.1"/>
    <property type="molecule type" value="Genomic_DNA"/>
</dbReference>
<dbReference type="RefSeq" id="NP_171721.3">
    <molecule id="F4HVX7-1"/>
    <property type="nucleotide sequence ID" value="NM_100099.4"/>
</dbReference>
<dbReference type="RefSeq" id="NP_973742.1">
    <molecule id="F4HVX7-2"/>
    <property type="nucleotide sequence ID" value="NM_202013.1"/>
</dbReference>
<dbReference type="STRING" id="3702.F4HVX7"/>
<dbReference type="PaxDb" id="3702-AT1G02190.1"/>
<dbReference type="ProteomicsDB" id="224481">
    <molecule id="F4HVX7-1"/>
</dbReference>
<dbReference type="EnsemblPlants" id="AT1G02190.1">
    <molecule id="F4HVX7-1"/>
    <property type="protein sequence ID" value="AT1G02190.1"/>
    <property type="gene ID" value="AT1G02190"/>
</dbReference>
<dbReference type="EnsemblPlants" id="AT1G02190.2">
    <molecule id="F4HVX7-2"/>
    <property type="protein sequence ID" value="AT1G02190.2"/>
    <property type="gene ID" value="AT1G02190"/>
</dbReference>
<dbReference type="GeneID" id="839541"/>
<dbReference type="Gramene" id="AT1G02190.1">
    <molecule id="F4HVX7-1"/>
    <property type="protein sequence ID" value="AT1G02190.1"/>
    <property type="gene ID" value="AT1G02190"/>
</dbReference>
<dbReference type="Gramene" id="AT1G02190.2">
    <molecule id="F4HVX7-2"/>
    <property type="protein sequence ID" value="AT1G02190.2"/>
    <property type="gene ID" value="AT1G02190"/>
</dbReference>
<dbReference type="KEGG" id="ath:AT1G02190"/>
<dbReference type="Araport" id="AT1G02190"/>
<dbReference type="TAIR" id="AT1G02190">
    <property type="gene designation" value="CER1-L1"/>
</dbReference>
<dbReference type="eggNOG" id="ENOG502QR3T">
    <property type="taxonomic scope" value="Eukaryota"/>
</dbReference>
<dbReference type="InParanoid" id="F4HVX7"/>
<dbReference type="OMA" id="FRLHAIW"/>
<dbReference type="OrthoDB" id="408954at2759"/>
<dbReference type="PhylomeDB" id="F4HVX7"/>
<dbReference type="PRO" id="PR:F4HVX7"/>
<dbReference type="Proteomes" id="UP000006548">
    <property type="component" value="Chromosome 1"/>
</dbReference>
<dbReference type="ExpressionAtlas" id="F4HVX7">
    <property type="expression patterns" value="baseline and differential"/>
</dbReference>
<dbReference type="GO" id="GO:0016020">
    <property type="term" value="C:membrane"/>
    <property type="evidence" value="ECO:0007669"/>
    <property type="project" value="UniProtKB-SubCell"/>
</dbReference>
<dbReference type="GO" id="GO:0005506">
    <property type="term" value="F:iron ion binding"/>
    <property type="evidence" value="ECO:0007669"/>
    <property type="project" value="InterPro"/>
</dbReference>
<dbReference type="GO" id="GO:0016491">
    <property type="term" value="F:oxidoreductase activity"/>
    <property type="evidence" value="ECO:0007669"/>
    <property type="project" value="InterPro"/>
</dbReference>
<dbReference type="GO" id="GO:0008610">
    <property type="term" value="P:lipid biosynthetic process"/>
    <property type="evidence" value="ECO:0007669"/>
    <property type="project" value="InterPro"/>
</dbReference>
<dbReference type="InterPro" id="IPR021940">
    <property type="entry name" value="CER1-like_C"/>
</dbReference>
<dbReference type="InterPro" id="IPR006694">
    <property type="entry name" value="Fatty_acid_hydroxylase"/>
</dbReference>
<dbReference type="InterPro" id="IPR050307">
    <property type="entry name" value="Sterol_Desaturase_Related"/>
</dbReference>
<dbReference type="PANTHER" id="PTHR11863">
    <property type="entry name" value="STEROL DESATURASE"/>
    <property type="match status" value="1"/>
</dbReference>
<dbReference type="Pfam" id="PF12076">
    <property type="entry name" value="CER1-like_C"/>
    <property type="match status" value="1"/>
</dbReference>
<dbReference type="Pfam" id="PF04116">
    <property type="entry name" value="FA_hydroxylase"/>
    <property type="match status" value="1"/>
</dbReference>
<sequence length="627" mass="72093">MASRPGALTEWPWSPLGSFKYLLVAPLVMASMHSYVTAVDEEKDLSRLMIVVLMLWRIVHSQIWISVSRQRTAKGTNKIVDKPIEFEQVDRERTWDDQVIFNTLLMYLANIKLPGASHLPPWRLDGAILMALLHAGPVEFLYYWFHRALHHHFLYSRYHSHHHSSIVTEPITSVVHPFAEHIAYTLLFAIPMVTASLCGILSIVSIMGYITYIDFMNNMGHCNFELFPKRLFHLFPPLKFLCYTPSFHSLHHTQFRTNYSLFMPIYDFIYGTTDNLTDSLYERSLEIEEESPDVIHLTHLTTHNSIYQMRLGFPSLSSCPLWSRPPWYLTCFMWPFTLLCSFALTSAIPLRTFVFERNRLRDLTVHSHLLPKFSFHYKSQRHHESINTIIEEAILEADEKGVKVMSLGLMNNREELNGSGEMYVQKYPKLKIRLVDGSSMAATVVINNIPKEATEIVFRGNLTKVASAVVFALCQKGVKVVVLREEEHSKLIKSGVDKNLVLSTSNSYYSPKVWLVGDGIENEEQMKAKEGTLFVPFSHFPPNKLRKDCFYQSTPAMRVPKSAQNIDSCENWLGRRVMSAWKIGGIVHALEGWEEHDCGNTCNVLRLHAIWEAALRHDFQPLPPSPL</sequence>